<sequence length="413" mass="45853">MSDFHNIRSRRRIPEASSYSTVDFDYDPDQKNHTSAVAPTSFAYSSLTTVFNASASQLWNSAQEALVSSYDTAEGTESIDADRSKVVETLESLSIFGNPLDHIIITMPSRDRTSEFRATAKSYEMKAAANGIRPQPKHEMLSESVQFNQLAKRIGKELSQTCAKMEKLAEYAKKKSCYEERSQIDHLSSIVKSDITGLNKQIGQLQEFSKRRAGNMKNQNSGHIQLVVVGLQSKLANVGKDYQSVLEISTETMKAEKNRRDKFSSGAAVPMGLPSSSSGANVRSKLLQDDEQHGSSSIALDMGALSNMQSQQTMQQRDSSLEYAQARSNTMATIEGSISELGQIFSQLASLVSEQGEMITRIDSNVEDTALNIDMAHSELVRYLQNISKNRWLMIQVFGVLMVFFVVFVLFLT</sequence>
<keyword id="KW-0175">Coiled coil</keyword>
<keyword id="KW-0472">Membrane</keyword>
<keyword id="KW-0532">Neurotransmitter transport</keyword>
<keyword id="KW-1185">Reference proteome</keyword>
<keyword id="KW-0812">Transmembrane</keyword>
<keyword id="KW-1133">Transmembrane helix</keyword>
<keyword id="KW-0813">Transport</keyword>
<proteinExistence type="inferred from homology"/>
<reference key="1">
    <citation type="journal article" date="1998" name="Science">
        <title>Genome sequence of the nematode C. elegans: a platform for investigating biology.</title>
        <authorList>
            <consortium name="The C. elegans sequencing consortium"/>
        </authorList>
    </citation>
    <scope>NUCLEOTIDE SEQUENCE [LARGE SCALE GENOMIC DNA]</scope>
    <source>
        <strain>Bristol N2</strain>
    </source>
</reference>
<accession>Q20797</accession>
<dbReference type="EMBL" id="Z72511">
    <property type="protein sequence ID" value="CAA96656.1"/>
    <property type="molecule type" value="Genomic_DNA"/>
</dbReference>
<dbReference type="PIR" id="T22686">
    <property type="entry name" value="T22686"/>
</dbReference>
<dbReference type="RefSeq" id="NP_505968.1">
    <property type="nucleotide sequence ID" value="NM_073567.9"/>
</dbReference>
<dbReference type="SMR" id="Q20797"/>
<dbReference type="BioGRID" id="44636">
    <property type="interactions" value="6"/>
</dbReference>
<dbReference type="FunCoup" id="Q20797">
    <property type="interactions" value="3168"/>
</dbReference>
<dbReference type="IntAct" id="Q20797">
    <property type="interactions" value="4"/>
</dbReference>
<dbReference type="STRING" id="6239.F55A11.2.1"/>
<dbReference type="iPTMnet" id="Q20797"/>
<dbReference type="PaxDb" id="6239-F55A11.2"/>
<dbReference type="PeptideAtlas" id="Q20797"/>
<dbReference type="EnsemblMetazoa" id="F55A11.2.1">
    <property type="protein sequence ID" value="F55A11.2.1"/>
    <property type="gene ID" value="WBGene00006373"/>
</dbReference>
<dbReference type="GeneID" id="179611"/>
<dbReference type="KEGG" id="cel:CELE_F55A11.2"/>
<dbReference type="UCSC" id="F55A11.2">
    <property type="organism name" value="c. elegans"/>
</dbReference>
<dbReference type="AGR" id="WB:WBGene00006373"/>
<dbReference type="CTD" id="179611"/>
<dbReference type="WormBase" id="F55A11.2">
    <property type="protein sequence ID" value="CE05944"/>
    <property type="gene ID" value="WBGene00006373"/>
    <property type="gene designation" value="syx-5"/>
</dbReference>
<dbReference type="eggNOG" id="KOG0812">
    <property type="taxonomic scope" value="Eukaryota"/>
</dbReference>
<dbReference type="GeneTree" id="ENSGT01000000214440"/>
<dbReference type="HOGENOM" id="CLU_044998_1_1_1"/>
<dbReference type="InParanoid" id="Q20797"/>
<dbReference type="OMA" id="EHNHNVV"/>
<dbReference type="OrthoDB" id="421009at2759"/>
<dbReference type="PhylomeDB" id="Q20797"/>
<dbReference type="Reactome" id="R-CEL-204005">
    <property type="pathway name" value="COPII-mediated vesicle transport"/>
</dbReference>
<dbReference type="Reactome" id="R-CEL-5694530">
    <property type="pathway name" value="Cargo concentration in the ER"/>
</dbReference>
<dbReference type="Reactome" id="R-CEL-6807878">
    <property type="pathway name" value="COPI-mediated anterograde transport"/>
</dbReference>
<dbReference type="Reactome" id="R-CEL-6811438">
    <property type="pathway name" value="Intra-Golgi traffic"/>
</dbReference>
<dbReference type="Reactome" id="R-CEL-9609523">
    <property type="pathway name" value="Insertion of tail-anchored proteins into the endoplasmic reticulum membrane"/>
</dbReference>
<dbReference type="PRO" id="PR:Q20797"/>
<dbReference type="Proteomes" id="UP000001940">
    <property type="component" value="Chromosome V"/>
</dbReference>
<dbReference type="Bgee" id="WBGene00006373">
    <property type="expression patterns" value="Expressed in adult organism and 4 other cell types or tissues"/>
</dbReference>
<dbReference type="GO" id="GO:0012505">
    <property type="term" value="C:endomembrane system"/>
    <property type="evidence" value="ECO:0000318"/>
    <property type="project" value="GO_Central"/>
</dbReference>
<dbReference type="GO" id="GO:0000139">
    <property type="term" value="C:Golgi membrane"/>
    <property type="evidence" value="ECO:0000318"/>
    <property type="project" value="GO_Central"/>
</dbReference>
<dbReference type="GO" id="GO:0098793">
    <property type="term" value="C:presynapse"/>
    <property type="evidence" value="ECO:0007669"/>
    <property type="project" value="GOC"/>
</dbReference>
<dbReference type="GO" id="GO:0031201">
    <property type="term" value="C:SNARE complex"/>
    <property type="evidence" value="ECO:0000318"/>
    <property type="project" value="GO_Central"/>
</dbReference>
<dbReference type="GO" id="GO:0005484">
    <property type="term" value="F:SNAP receptor activity"/>
    <property type="evidence" value="ECO:0000318"/>
    <property type="project" value="GO_Central"/>
</dbReference>
<dbReference type="GO" id="GO:0000149">
    <property type="term" value="F:SNARE binding"/>
    <property type="evidence" value="ECO:0000318"/>
    <property type="project" value="GO_Central"/>
</dbReference>
<dbReference type="GO" id="GO:0006888">
    <property type="term" value="P:endoplasmic reticulum to Golgi vesicle-mediated transport"/>
    <property type="evidence" value="ECO:0000318"/>
    <property type="project" value="GO_Central"/>
</dbReference>
<dbReference type="GO" id="GO:0006886">
    <property type="term" value="P:intracellular protein transport"/>
    <property type="evidence" value="ECO:0000318"/>
    <property type="project" value="GO_Central"/>
</dbReference>
<dbReference type="GO" id="GO:0016081">
    <property type="term" value="P:synaptic vesicle docking"/>
    <property type="evidence" value="ECO:0000250"/>
    <property type="project" value="UniProtKB"/>
</dbReference>
<dbReference type="GO" id="GO:0048278">
    <property type="term" value="P:vesicle docking"/>
    <property type="evidence" value="ECO:0000318"/>
    <property type="project" value="GO_Central"/>
</dbReference>
<dbReference type="GO" id="GO:0006906">
    <property type="term" value="P:vesicle fusion"/>
    <property type="evidence" value="ECO:0000318"/>
    <property type="project" value="GO_Central"/>
</dbReference>
<dbReference type="CDD" id="cd15844">
    <property type="entry name" value="SNARE_syntaxin5"/>
    <property type="match status" value="1"/>
</dbReference>
<dbReference type="FunFam" id="1.20.58.70:FF:000067">
    <property type="entry name" value="Putative syntaxin-5"/>
    <property type="match status" value="1"/>
</dbReference>
<dbReference type="Gene3D" id="1.20.58.70">
    <property type="match status" value="1"/>
</dbReference>
<dbReference type="InterPro" id="IPR010989">
    <property type="entry name" value="SNARE"/>
</dbReference>
<dbReference type="InterPro" id="IPR045242">
    <property type="entry name" value="Syntaxin"/>
</dbReference>
<dbReference type="InterPro" id="IPR021538">
    <property type="entry name" value="Syntaxin-5_N"/>
</dbReference>
<dbReference type="InterPro" id="IPR006012">
    <property type="entry name" value="Syntaxin/epimorphin_CS"/>
</dbReference>
<dbReference type="InterPro" id="IPR000727">
    <property type="entry name" value="T_SNARE_dom"/>
</dbReference>
<dbReference type="PANTHER" id="PTHR19957">
    <property type="entry name" value="SYNTAXIN"/>
    <property type="match status" value="1"/>
</dbReference>
<dbReference type="PANTHER" id="PTHR19957:SF3">
    <property type="entry name" value="SYNTAXIN-5"/>
    <property type="match status" value="1"/>
</dbReference>
<dbReference type="Pfam" id="PF05739">
    <property type="entry name" value="SNARE"/>
    <property type="match status" value="1"/>
</dbReference>
<dbReference type="Pfam" id="PF11416">
    <property type="entry name" value="Syntaxin-5_N"/>
    <property type="match status" value="1"/>
</dbReference>
<dbReference type="SMART" id="SM00397">
    <property type="entry name" value="t_SNARE"/>
    <property type="match status" value="1"/>
</dbReference>
<dbReference type="SUPFAM" id="SSF47661">
    <property type="entry name" value="t-snare proteins"/>
    <property type="match status" value="1"/>
</dbReference>
<dbReference type="PROSITE" id="PS00914">
    <property type="entry name" value="SYNTAXIN"/>
    <property type="match status" value="1"/>
</dbReference>
<dbReference type="PROSITE" id="PS50192">
    <property type="entry name" value="T_SNARE"/>
    <property type="match status" value="1"/>
</dbReference>
<comment type="function">
    <text evidence="1">Potentially involved in docking of synaptic vesicles at presynaptic active zones.</text>
</comment>
<comment type="subcellular location">
    <subcellularLocation>
        <location evidence="5">Membrane</location>
        <topology evidence="5">Single-pass type IV membrane protein</topology>
    </subcellularLocation>
</comment>
<comment type="similarity">
    <text evidence="5">Belongs to the syntaxin family.</text>
</comment>
<protein>
    <recommendedName>
        <fullName>Putative syntaxin-5</fullName>
    </recommendedName>
</protein>
<evidence type="ECO:0000250" key="1"/>
<evidence type="ECO:0000255" key="2"/>
<evidence type="ECO:0000255" key="3">
    <source>
        <dbReference type="PROSITE-ProRule" id="PRU00202"/>
    </source>
</evidence>
<evidence type="ECO:0000256" key="4">
    <source>
        <dbReference type="SAM" id="MobiDB-lite"/>
    </source>
</evidence>
<evidence type="ECO:0000305" key="5"/>
<feature type="chain" id="PRO_0000210241" description="Putative syntaxin-5">
    <location>
        <begin position="1"/>
        <end position="413"/>
    </location>
</feature>
<feature type="topological domain" description="Cytoplasmic" evidence="2">
    <location>
        <begin position="1"/>
        <end position="391"/>
    </location>
</feature>
<feature type="transmembrane region" description="Helical; Anchor for type IV membrane protein" evidence="2">
    <location>
        <begin position="392"/>
        <end position="412"/>
    </location>
</feature>
<feature type="topological domain" description="Extracellular" evidence="2">
    <location>
        <position position="413"/>
    </location>
</feature>
<feature type="domain" description="t-SNARE coiled-coil homology" evidence="3">
    <location>
        <begin position="321"/>
        <end position="383"/>
    </location>
</feature>
<feature type="region of interest" description="Disordered" evidence="4">
    <location>
        <begin position="257"/>
        <end position="290"/>
    </location>
</feature>
<organism>
    <name type="scientific">Caenorhabditis elegans</name>
    <dbReference type="NCBI Taxonomy" id="6239"/>
    <lineage>
        <taxon>Eukaryota</taxon>
        <taxon>Metazoa</taxon>
        <taxon>Ecdysozoa</taxon>
        <taxon>Nematoda</taxon>
        <taxon>Chromadorea</taxon>
        <taxon>Rhabditida</taxon>
        <taxon>Rhabditina</taxon>
        <taxon>Rhabditomorpha</taxon>
        <taxon>Rhabditoidea</taxon>
        <taxon>Rhabditidae</taxon>
        <taxon>Peloderinae</taxon>
        <taxon>Caenorhabditis</taxon>
    </lineage>
</organism>
<name>STX5_CAEEL</name>
<gene>
    <name type="primary">syx-5</name>
    <name type="synonym">syn-3</name>
    <name type="ORF">F55A11.2</name>
</gene>